<accession>P66376</accession>
<accession>P58172</accession>
<accession>Q490W9</accession>
<gene>
    <name evidence="1" type="primary">rpsL</name>
    <name type="ordered locus">SPy_0271</name>
    <name type="ordered locus">M5005_Spy0230</name>
</gene>
<feature type="chain" id="PRO_0000146327" description="Small ribosomal subunit protein uS12">
    <location>
        <begin position="1"/>
        <end position="137"/>
    </location>
</feature>
<feature type="region of interest" description="Disordered" evidence="2">
    <location>
        <begin position="1"/>
        <end position="21"/>
    </location>
</feature>
<feature type="region of interest" description="Disordered" evidence="2">
    <location>
        <begin position="33"/>
        <end position="57"/>
    </location>
</feature>
<reference key="1">
    <citation type="journal article" date="2001" name="Proc. Natl. Acad. Sci. U.S.A.">
        <title>Complete genome sequence of an M1 strain of Streptococcus pyogenes.</title>
        <authorList>
            <person name="Ferretti J.J."/>
            <person name="McShan W.M."/>
            <person name="Ajdic D.J."/>
            <person name="Savic D.J."/>
            <person name="Savic G."/>
            <person name="Lyon K."/>
            <person name="Primeaux C."/>
            <person name="Sezate S."/>
            <person name="Suvorov A.N."/>
            <person name="Kenton S."/>
            <person name="Lai H.S."/>
            <person name="Lin S.P."/>
            <person name="Qian Y."/>
            <person name="Jia H.G."/>
            <person name="Najar F.Z."/>
            <person name="Ren Q."/>
            <person name="Zhu H."/>
            <person name="Song L."/>
            <person name="White J."/>
            <person name="Yuan X."/>
            <person name="Clifton S.W."/>
            <person name="Roe B.A."/>
            <person name="McLaughlin R.E."/>
        </authorList>
    </citation>
    <scope>NUCLEOTIDE SEQUENCE [LARGE SCALE GENOMIC DNA]</scope>
    <source>
        <strain>ATCC 700294 / SF370 / Serotype M1</strain>
    </source>
</reference>
<reference key="2">
    <citation type="journal article" date="2005" name="J. Infect. Dis.">
        <title>Evolutionary origin and emergence of a highly successful clone of serotype M1 group A Streptococcus involved multiple horizontal gene transfer events.</title>
        <authorList>
            <person name="Sumby P."/>
            <person name="Porcella S.F."/>
            <person name="Madrigal A.G."/>
            <person name="Barbian K.D."/>
            <person name="Virtaneva K."/>
            <person name="Ricklefs S.M."/>
            <person name="Sturdevant D.E."/>
            <person name="Graham M.R."/>
            <person name="Vuopio-Varkila J."/>
            <person name="Hoe N.P."/>
            <person name="Musser J.M."/>
        </authorList>
    </citation>
    <scope>NUCLEOTIDE SEQUENCE [LARGE SCALE GENOMIC DNA]</scope>
    <source>
        <strain>ATCC BAA-947 / MGAS5005 / Serotype M1</strain>
    </source>
</reference>
<evidence type="ECO:0000255" key="1">
    <source>
        <dbReference type="HAMAP-Rule" id="MF_00403"/>
    </source>
</evidence>
<evidence type="ECO:0000256" key="2">
    <source>
        <dbReference type="SAM" id="MobiDB-lite"/>
    </source>
</evidence>
<evidence type="ECO:0000305" key="3"/>
<name>RS12_STRP1</name>
<sequence>MPTINQLVRKPRKSKIEKSDSPALNIGYNSHKKVQTKMAAPQKRGVATRVGTMTPKKPNSALRKFARVRLSNLIEVTAYIPGIGHNLQEHSVVLIRGGRVKDLPGVRYHIVRGALDTAGVADRKQGRSKYGAKRPKG</sequence>
<proteinExistence type="inferred from homology"/>
<protein>
    <recommendedName>
        <fullName evidence="1">Small ribosomal subunit protein uS12</fullName>
    </recommendedName>
    <alternativeName>
        <fullName evidence="3">30S ribosomal protein S12</fullName>
    </alternativeName>
</protein>
<comment type="function">
    <text evidence="1">With S4 and S5 plays an important role in translational accuracy.</text>
</comment>
<comment type="function">
    <text evidence="1">Interacts with and stabilizes bases of the 16S rRNA that are involved in tRNA selection in the A site and with the mRNA backbone. Located at the interface of the 30S and 50S subunits, it traverses the body of the 30S subunit contacting proteins on the other side and probably holding the rRNA structure together. The combined cluster of proteins S8, S12 and S17 appears to hold together the shoulder and platform of the 30S subunit.</text>
</comment>
<comment type="subunit">
    <text evidence="1">Part of the 30S ribosomal subunit. Contacts proteins S8 and S17. May interact with IF1 in the 30S initiation complex.</text>
</comment>
<comment type="similarity">
    <text evidence="1">Belongs to the universal ribosomal protein uS12 family.</text>
</comment>
<comment type="caution">
    <text evidence="3">Because the enzyme that would modify Asp-102 to 3-methylthioaspartic acid has not been found in the proteome of this organism, that modification is not predicted.</text>
</comment>
<organism>
    <name type="scientific">Streptococcus pyogenes serotype M1</name>
    <dbReference type="NCBI Taxonomy" id="301447"/>
    <lineage>
        <taxon>Bacteria</taxon>
        <taxon>Bacillati</taxon>
        <taxon>Bacillota</taxon>
        <taxon>Bacilli</taxon>
        <taxon>Lactobacillales</taxon>
        <taxon>Streptococcaceae</taxon>
        <taxon>Streptococcus</taxon>
    </lineage>
</organism>
<keyword id="KW-1185">Reference proteome</keyword>
<keyword id="KW-0687">Ribonucleoprotein</keyword>
<keyword id="KW-0689">Ribosomal protein</keyword>
<keyword id="KW-0694">RNA-binding</keyword>
<keyword id="KW-0699">rRNA-binding</keyword>
<keyword id="KW-0820">tRNA-binding</keyword>
<dbReference type="EMBL" id="AE004092">
    <property type="protein sequence ID" value="AAK33345.1"/>
    <property type="molecule type" value="Genomic_DNA"/>
</dbReference>
<dbReference type="EMBL" id="CP000017">
    <property type="protein sequence ID" value="AAZ50849.1"/>
    <property type="molecule type" value="Genomic_DNA"/>
</dbReference>
<dbReference type="RefSeq" id="NP_268624.1">
    <property type="nucleotide sequence ID" value="NC_002737.2"/>
</dbReference>
<dbReference type="SMR" id="P66376"/>
<dbReference type="PaxDb" id="1314-HKU360_00270"/>
<dbReference type="KEGG" id="spy:SPy_0271"/>
<dbReference type="KEGG" id="spz:M5005_Spy0230"/>
<dbReference type="PATRIC" id="fig|160490.10.peg.238"/>
<dbReference type="HOGENOM" id="CLU_104295_1_2_9"/>
<dbReference type="OMA" id="VCIRVYT"/>
<dbReference type="PRO" id="PR:P66376"/>
<dbReference type="Proteomes" id="UP000000750">
    <property type="component" value="Chromosome"/>
</dbReference>
<dbReference type="GO" id="GO:0015935">
    <property type="term" value="C:small ribosomal subunit"/>
    <property type="evidence" value="ECO:0007669"/>
    <property type="project" value="InterPro"/>
</dbReference>
<dbReference type="GO" id="GO:0019843">
    <property type="term" value="F:rRNA binding"/>
    <property type="evidence" value="ECO:0007669"/>
    <property type="project" value="UniProtKB-UniRule"/>
</dbReference>
<dbReference type="GO" id="GO:0003735">
    <property type="term" value="F:structural constituent of ribosome"/>
    <property type="evidence" value="ECO:0007669"/>
    <property type="project" value="InterPro"/>
</dbReference>
<dbReference type="GO" id="GO:0000049">
    <property type="term" value="F:tRNA binding"/>
    <property type="evidence" value="ECO:0007669"/>
    <property type="project" value="UniProtKB-UniRule"/>
</dbReference>
<dbReference type="GO" id="GO:0006412">
    <property type="term" value="P:translation"/>
    <property type="evidence" value="ECO:0007669"/>
    <property type="project" value="UniProtKB-UniRule"/>
</dbReference>
<dbReference type="CDD" id="cd03368">
    <property type="entry name" value="Ribosomal_S12"/>
    <property type="match status" value="1"/>
</dbReference>
<dbReference type="FunFam" id="2.40.50.140:FF:000001">
    <property type="entry name" value="30S ribosomal protein S12"/>
    <property type="match status" value="1"/>
</dbReference>
<dbReference type="Gene3D" id="2.40.50.140">
    <property type="entry name" value="Nucleic acid-binding proteins"/>
    <property type="match status" value="1"/>
</dbReference>
<dbReference type="HAMAP" id="MF_00403_B">
    <property type="entry name" value="Ribosomal_uS12_B"/>
    <property type="match status" value="1"/>
</dbReference>
<dbReference type="InterPro" id="IPR012340">
    <property type="entry name" value="NA-bd_OB-fold"/>
</dbReference>
<dbReference type="InterPro" id="IPR006032">
    <property type="entry name" value="Ribosomal_uS12"/>
</dbReference>
<dbReference type="InterPro" id="IPR005679">
    <property type="entry name" value="Ribosomal_uS12_bac"/>
</dbReference>
<dbReference type="NCBIfam" id="TIGR00981">
    <property type="entry name" value="rpsL_bact"/>
    <property type="match status" value="1"/>
</dbReference>
<dbReference type="PANTHER" id="PTHR11652">
    <property type="entry name" value="30S RIBOSOMAL PROTEIN S12 FAMILY MEMBER"/>
    <property type="match status" value="1"/>
</dbReference>
<dbReference type="Pfam" id="PF00164">
    <property type="entry name" value="Ribosom_S12_S23"/>
    <property type="match status" value="1"/>
</dbReference>
<dbReference type="PRINTS" id="PR01034">
    <property type="entry name" value="RIBOSOMALS12"/>
</dbReference>
<dbReference type="SUPFAM" id="SSF50249">
    <property type="entry name" value="Nucleic acid-binding proteins"/>
    <property type="match status" value="1"/>
</dbReference>
<dbReference type="PROSITE" id="PS00055">
    <property type="entry name" value="RIBOSOMAL_S12"/>
    <property type="match status" value="1"/>
</dbReference>